<sequence>MKIPEEEFLAPGHRGCAGCGATVGVRLALKVLGKNTVAVSSTGCLEVITTPYPETAWRIPWIHVAFENAAAVASGVERALKAKGRDDVNVVAFAGDGGTADIGLQALSGAMERGHNIIYICYDNEAYMNTGIQRSASTPYGASTTTSPHGKESFGEDRPKKNMPLIMAAHGVPYVATASISYPEDFMEKVRKAKETDGPAYIHLHQPCTTGWGFDPAKTVELGRLAVETGSWILYEIEDGDFRVTYRPVQRKPVEEYLNAQKRFRHLTEEQKARIQEYVDSVCQELRI</sequence>
<keyword id="KW-0004">4Fe-4S</keyword>
<keyword id="KW-0408">Iron</keyword>
<keyword id="KW-0411">Iron-sulfur</keyword>
<keyword id="KW-0479">Metal-binding</keyword>
<keyword id="KW-0560">Oxidoreductase</keyword>
<keyword id="KW-1185">Reference proteome</keyword>
<name>PORB_METTH</name>
<accession>O27771</accession>
<gene>
    <name type="primary">porB</name>
    <name type="ordered locus">MTH_1738</name>
</gene>
<dbReference type="EC" id="1.2.7.1"/>
<dbReference type="EMBL" id="AE000666">
    <property type="protein sequence ID" value="AAB86208.1"/>
    <property type="molecule type" value="Genomic_DNA"/>
</dbReference>
<dbReference type="PIR" id="D69099">
    <property type="entry name" value="D69099"/>
</dbReference>
<dbReference type="RefSeq" id="WP_010877344.1">
    <property type="nucleotide sequence ID" value="NC_000916.1"/>
</dbReference>
<dbReference type="SMR" id="O27771"/>
<dbReference type="FunCoup" id="O27771">
    <property type="interactions" value="69"/>
</dbReference>
<dbReference type="STRING" id="187420.MTH_1738"/>
<dbReference type="PaxDb" id="187420-MTH_1738"/>
<dbReference type="EnsemblBacteria" id="AAB86208">
    <property type="protein sequence ID" value="AAB86208"/>
    <property type="gene ID" value="MTH_1738"/>
</dbReference>
<dbReference type="GeneID" id="82298167"/>
<dbReference type="KEGG" id="mth:MTH_1738"/>
<dbReference type="PATRIC" id="fig|187420.15.peg.1697"/>
<dbReference type="HOGENOM" id="CLU_058423_0_0_2"/>
<dbReference type="InParanoid" id="O27771"/>
<dbReference type="BioCyc" id="MetaCyc:MONOMER-14530"/>
<dbReference type="Proteomes" id="UP000005223">
    <property type="component" value="Chromosome"/>
</dbReference>
<dbReference type="GO" id="GO:0051539">
    <property type="term" value="F:4 iron, 4 sulfur cluster binding"/>
    <property type="evidence" value="ECO:0007669"/>
    <property type="project" value="UniProtKB-KW"/>
</dbReference>
<dbReference type="GO" id="GO:0046872">
    <property type="term" value="F:metal ion binding"/>
    <property type="evidence" value="ECO:0007669"/>
    <property type="project" value="UniProtKB-KW"/>
</dbReference>
<dbReference type="GO" id="GO:0019164">
    <property type="term" value="F:pyruvate synthase activity"/>
    <property type="evidence" value="ECO:0007669"/>
    <property type="project" value="UniProtKB-EC"/>
</dbReference>
<dbReference type="GO" id="GO:0030976">
    <property type="term" value="F:thiamine pyrophosphate binding"/>
    <property type="evidence" value="ECO:0007669"/>
    <property type="project" value="InterPro"/>
</dbReference>
<dbReference type="CDD" id="cd03376">
    <property type="entry name" value="TPP_PFOR_porB_like"/>
    <property type="match status" value="1"/>
</dbReference>
<dbReference type="Gene3D" id="3.40.50.970">
    <property type="match status" value="2"/>
</dbReference>
<dbReference type="InterPro" id="IPR051479">
    <property type="entry name" value="PorB-like"/>
</dbReference>
<dbReference type="InterPro" id="IPR029061">
    <property type="entry name" value="THDP-binding"/>
</dbReference>
<dbReference type="InterPro" id="IPR011766">
    <property type="entry name" value="TPP_enzyme_TPP-bd"/>
</dbReference>
<dbReference type="NCBIfam" id="NF008819">
    <property type="entry name" value="PRK11865.1"/>
    <property type="match status" value="1"/>
</dbReference>
<dbReference type="PANTHER" id="PTHR42897">
    <property type="entry name" value="PYRUVATE SYNTHASE SUBUNIT PORB"/>
    <property type="match status" value="1"/>
</dbReference>
<dbReference type="PANTHER" id="PTHR42897:SF2">
    <property type="entry name" value="PYRUVATE SYNTHASE SUBUNIT PORB"/>
    <property type="match status" value="1"/>
</dbReference>
<dbReference type="Pfam" id="PF02775">
    <property type="entry name" value="TPP_enzyme_C"/>
    <property type="match status" value="1"/>
</dbReference>
<dbReference type="SUPFAM" id="SSF52518">
    <property type="entry name" value="Thiamin diphosphate-binding fold (THDP-binding)"/>
    <property type="match status" value="1"/>
</dbReference>
<organism>
    <name type="scientific">Methanothermobacter thermautotrophicus (strain ATCC 29096 / DSM 1053 / JCM 10044 / NBRC 100330 / Delta H)</name>
    <name type="common">Methanobacterium thermoautotrophicum</name>
    <dbReference type="NCBI Taxonomy" id="187420"/>
    <lineage>
        <taxon>Archaea</taxon>
        <taxon>Methanobacteriati</taxon>
        <taxon>Methanobacteriota</taxon>
        <taxon>Methanomada group</taxon>
        <taxon>Methanobacteria</taxon>
        <taxon>Methanobacteriales</taxon>
        <taxon>Methanobacteriaceae</taxon>
        <taxon>Methanothermobacter</taxon>
    </lineage>
</organism>
<evidence type="ECO:0000250" key="1">
    <source>
        <dbReference type="UniProtKB" id="P94692"/>
    </source>
</evidence>
<evidence type="ECO:0000256" key="2">
    <source>
        <dbReference type="SAM" id="MobiDB-lite"/>
    </source>
</evidence>
<feature type="chain" id="PRO_0000099904" description="Pyruvate synthase subunit PorB">
    <location>
        <begin position="1"/>
        <end position="288"/>
    </location>
</feature>
<feature type="region of interest" description="Disordered" evidence="2">
    <location>
        <begin position="137"/>
        <end position="159"/>
    </location>
</feature>
<feature type="compositionally biased region" description="Polar residues" evidence="2">
    <location>
        <begin position="137"/>
        <end position="148"/>
    </location>
</feature>
<feature type="compositionally biased region" description="Basic and acidic residues" evidence="2">
    <location>
        <begin position="149"/>
        <end position="159"/>
    </location>
</feature>
<feature type="binding site" evidence="1">
    <location>
        <position position="16"/>
    </location>
    <ligand>
        <name>[4Fe-4S] cluster</name>
        <dbReference type="ChEBI" id="CHEBI:49883"/>
    </ligand>
</feature>
<feature type="binding site" evidence="1">
    <location>
        <position position="19"/>
    </location>
    <ligand>
        <name>[4Fe-4S] cluster</name>
        <dbReference type="ChEBI" id="CHEBI:49883"/>
    </ligand>
</feature>
<feature type="binding site" evidence="1">
    <location>
        <position position="44"/>
    </location>
    <ligand>
        <name>[4Fe-4S] cluster</name>
        <dbReference type="ChEBI" id="CHEBI:49883"/>
    </ligand>
</feature>
<feature type="binding site" evidence="1">
    <location>
        <position position="208"/>
    </location>
    <ligand>
        <name>[4Fe-4S] cluster</name>
        <dbReference type="ChEBI" id="CHEBI:49883"/>
    </ligand>
</feature>
<reference key="1">
    <citation type="journal article" date="1997" name="J. Bacteriol.">
        <title>Complete genome sequence of Methanobacterium thermoautotrophicum deltaH: functional analysis and comparative genomics.</title>
        <authorList>
            <person name="Smith D.R."/>
            <person name="Doucette-Stamm L.A."/>
            <person name="Deloughery C."/>
            <person name="Lee H.-M."/>
            <person name="Dubois J."/>
            <person name="Aldredge T."/>
            <person name="Bashirzadeh R."/>
            <person name="Blakely D."/>
            <person name="Cook R."/>
            <person name="Gilbert K."/>
            <person name="Harrison D."/>
            <person name="Hoang L."/>
            <person name="Keagle P."/>
            <person name="Lumm W."/>
            <person name="Pothier B."/>
            <person name="Qiu D."/>
            <person name="Spadafora R."/>
            <person name="Vicare R."/>
            <person name="Wang Y."/>
            <person name="Wierzbowski J."/>
            <person name="Gibson R."/>
            <person name="Jiwani N."/>
            <person name="Caruso A."/>
            <person name="Bush D."/>
            <person name="Safer H."/>
            <person name="Patwell D."/>
            <person name="Prabhakar S."/>
            <person name="McDougall S."/>
            <person name="Shimer G."/>
            <person name="Goyal A."/>
            <person name="Pietrovski S."/>
            <person name="Church G.M."/>
            <person name="Daniels C.J."/>
            <person name="Mao J.-I."/>
            <person name="Rice P."/>
            <person name="Noelling J."/>
            <person name="Reeve J.N."/>
        </authorList>
    </citation>
    <scope>NUCLEOTIDE SEQUENCE [LARGE SCALE GENOMIC DNA]</scope>
    <source>
        <strain>ATCC 29096 / DSM 1053 / JCM 10044 / NBRC 100330 / Delta H</strain>
    </source>
</reference>
<comment type="catalytic activity">
    <reaction>
        <text>2 oxidized [2Fe-2S]-[ferredoxin] + pyruvate + CoA = 2 reduced [2Fe-2S]-[ferredoxin] + acetyl-CoA + CO2 + H(+)</text>
        <dbReference type="Rhea" id="RHEA:12765"/>
        <dbReference type="Rhea" id="RHEA-COMP:10000"/>
        <dbReference type="Rhea" id="RHEA-COMP:10001"/>
        <dbReference type="ChEBI" id="CHEBI:15361"/>
        <dbReference type="ChEBI" id="CHEBI:15378"/>
        <dbReference type="ChEBI" id="CHEBI:16526"/>
        <dbReference type="ChEBI" id="CHEBI:33737"/>
        <dbReference type="ChEBI" id="CHEBI:33738"/>
        <dbReference type="ChEBI" id="CHEBI:57287"/>
        <dbReference type="ChEBI" id="CHEBI:57288"/>
        <dbReference type="EC" id="1.2.7.1"/>
    </reaction>
</comment>
<comment type="cofactor">
    <cofactor evidence="1">
        <name>[4Fe-4S] cluster</name>
        <dbReference type="ChEBI" id="CHEBI:49883"/>
    </cofactor>
    <text evidence="1">Binds 1 [4Fe-4S] cluster per subunit.</text>
</comment>
<comment type="subunit">
    <text>Heterotetramer of one alpha, one beta, one delta and one gamma chain.</text>
</comment>
<protein>
    <recommendedName>
        <fullName>Pyruvate synthase subunit PorB</fullName>
        <ecNumber>1.2.7.1</ecNumber>
    </recommendedName>
    <alternativeName>
        <fullName>Pyruvate oxidoreductase beta chain</fullName>
        <shortName>POR</shortName>
    </alternativeName>
    <alternativeName>
        <fullName>Pyruvic-ferredoxin oxidoreductase subunit beta</fullName>
    </alternativeName>
</protein>
<proteinExistence type="inferred from homology"/>